<protein>
    <recommendedName>
        <fullName>Putative glutaredoxin-C2</fullName>
    </recommendedName>
</protein>
<comment type="function">
    <text evidence="1">Has a glutathione-disulfide oxidoreductase activity in the presence of NADPH and glutathione reductase. Reduces low molecular weight disulfides and proteins (By similarity).</text>
</comment>
<comment type="subcellular location">
    <subcellularLocation>
        <location evidence="1">Cytoplasm</location>
    </subcellularLocation>
</comment>
<comment type="similarity">
    <text evidence="3">Belongs to the glutaredoxin family. CC-type subfamily.</text>
</comment>
<accession>Q0JG89</accession>
<accession>A3A1B1</accession>
<accession>Q942X3</accession>
<keyword id="KW-0963">Cytoplasm</keyword>
<keyword id="KW-1015">Disulfide bond</keyword>
<keyword id="KW-0249">Electron transport</keyword>
<keyword id="KW-0676">Redox-active center</keyword>
<keyword id="KW-1185">Reference proteome</keyword>
<keyword id="KW-0813">Transport</keyword>
<name>GRXC2_ORYSJ</name>
<sequence>MAERVARLSSQRAVVIFGASNCFMCHVVKTLFSELGVSWAVHEVDKDPNGKDVERALAGMVGRTPPVPAVFIGGKLVGPTDQVMSLHLAGKLVPLLREAGALWLRDTKYSYILPANQLINYRSIN</sequence>
<reference key="1">
    <citation type="journal article" date="2002" name="Nature">
        <title>The genome sequence and structure of rice chromosome 1.</title>
        <authorList>
            <person name="Sasaki T."/>
            <person name="Matsumoto T."/>
            <person name="Yamamoto K."/>
            <person name="Sakata K."/>
            <person name="Baba T."/>
            <person name="Katayose Y."/>
            <person name="Wu J."/>
            <person name="Niimura Y."/>
            <person name="Cheng Z."/>
            <person name="Nagamura Y."/>
            <person name="Antonio B.A."/>
            <person name="Kanamori H."/>
            <person name="Hosokawa S."/>
            <person name="Masukawa M."/>
            <person name="Arikawa K."/>
            <person name="Chiden Y."/>
            <person name="Hayashi M."/>
            <person name="Okamoto M."/>
            <person name="Ando T."/>
            <person name="Aoki H."/>
            <person name="Arita K."/>
            <person name="Hamada M."/>
            <person name="Harada C."/>
            <person name="Hijishita S."/>
            <person name="Honda M."/>
            <person name="Ichikawa Y."/>
            <person name="Idonuma A."/>
            <person name="Iijima M."/>
            <person name="Ikeda M."/>
            <person name="Ikeno M."/>
            <person name="Ito S."/>
            <person name="Ito T."/>
            <person name="Ito Y."/>
            <person name="Ito Y."/>
            <person name="Iwabuchi A."/>
            <person name="Kamiya K."/>
            <person name="Karasawa W."/>
            <person name="Katagiri S."/>
            <person name="Kikuta A."/>
            <person name="Kobayashi N."/>
            <person name="Kono I."/>
            <person name="Machita K."/>
            <person name="Maehara T."/>
            <person name="Mizuno H."/>
            <person name="Mizubayashi T."/>
            <person name="Mukai Y."/>
            <person name="Nagasaki H."/>
            <person name="Nakashima M."/>
            <person name="Nakama Y."/>
            <person name="Nakamichi Y."/>
            <person name="Nakamura M."/>
            <person name="Namiki N."/>
            <person name="Negishi M."/>
            <person name="Ohta I."/>
            <person name="Ono N."/>
            <person name="Saji S."/>
            <person name="Sakai K."/>
            <person name="Shibata M."/>
            <person name="Shimokawa T."/>
            <person name="Shomura A."/>
            <person name="Song J."/>
            <person name="Takazaki Y."/>
            <person name="Terasawa K."/>
            <person name="Tsuji K."/>
            <person name="Waki K."/>
            <person name="Yamagata H."/>
            <person name="Yamane H."/>
            <person name="Yoshiki S."/>
            <person name="Yoshihara R."/>
            <person name="Yukawa K."/>
            <person name="Zhong H."/>
            <person name="Iwama H."/>
            <person name="Endo T."/>
            <person name="Ito H."/>
            <person name="Hahn J.H."/>
            <person name="Kim H.-I."/>
            <person name="Eun M.-Y."/>
            <person name="Yano M."/>
            <person name="Jiang J."/>
            <person name="Gojobori T."/>
        </authorList>
    </citation>
    <scope>NUCLEOTIDE SEQUENCE [LARGE SCALE GENOMIC DNA]</scope>
    <source>
        <strain>cv. Nipponbare</strain>
    </source>
</reference>
<reference key="2">
    <citation type="journal article" date="2005" name="Nature">
        <title>The map-based sequence of the rice genome.</title>
        <authorList>
            <consortium name="International rice genome sequencing project (IRGSP)"/>
        </authorList>
    </citation>
    <scope>NUCLEOTIDE SEQUENCE [LARGE SCALE GENOMIC DNA]</scope>
    <source>
        <strain>cv. Nipponbare</strain>
    </source>
</reference>
<reference key="3">
    <citation type="journal article" date="2008" name="Nucleic Acids Res.">
        <title>The rice annotation project database (RAP-DB): 2008 update.</title>
        <authorList>
            <consortium name="The rice annotation project (RAP)"/>
        </authorList>
    </citation>
    <scope>GENOME REANNOTATION</scope>
    <source>
        <strain>cv. Nipponbare</strain>
    </source>
</reference>
<reference key="4">
    <citation type="journal article" date="2013" name="Rice">
        <title>Improvement of the Oryza sativa Nipponbare reference genome using next generation sequence and optical map data.</title>
        <authorList>
            <person name="Kawahara Y."/>
            <person name="de la Bastide M."/>
            <person name="Hamilton J.P."/>
            <person name="Kanamori H."/>
            <person name="McCombie W.R."/>
            <person name="Ouyang S."/>
            <person name="Schwartz D.C."/>
            <person name="Tanaka T."/>
            <person name="Wu J."/>
            <person name="Zhou S."/>
            <person name="Childs K.L."/>
            <person name="Davidson R.M."/>
            <person name="Lin H."/>
            <person name="Quesada-Ocampo L."/>
            <person name="Vaillancourt B."/>
            <person name="Sakai H."/>
            <person name="Lee S.S."/>
            <person name="Kim J."/>
            <person name="Numa H."/>
            <person name="Itoh T."/>
            <person name="Buell C.R."/>
            <person name="Matsumoto T."/>
        </authorList>
    </citation>
    <scope>GENOME REANNOTATION</scope>
    <source>
        <strain>cv. Nipponbare</strain>
    </source>
</reference>
<reference key="5">
    <citation type="journal article" date="2005" name="PLoS Biol.">
        <title>The genomes of Oryza sativa: a history of duplications.</title>
        <authorList>
            <person name="Yu J."/>
            <person name="Wang J."/>
            <person name="Lin W."/>
            <person name="Li S."/>
            <person name="Li H."/>
            <person name="Zhou J."/>
            <person name="Ni P."/>
            <person name="Dong W."/>
            <person name="Hu S."/>
            <person name="Zeng C."/>
            <person name="Zhang J."/>
            <person name="Zhang Y."/>
            <person name="Li R."/>
            <person name="Xu Z."/>
            <person name="Li S."/>
            <person name="Li X."/>
            <person name="Zheng H."/>
            <person name="Cong L."/>
            <person name="Lin L."/>
            <person name="Yin J."/>
            <person name="Geng J."/>
            <person name="Li G."/>
            <person name="Shi J."/>
            <person name="Liu J."/>
            <person name="Lv H."/>
            <person name="Li J."/>
            <person name="Wang J."/>
            <person name="Deng Y."/>
            <person name="Ran L."/>
            <person name="Shi X."/>
            <person name="Wang X."/>
            <person name="Wu Q."/>
            <person name="Li C."/>
            <person name="Ren X."/>
            <person name="Wang J."/>
            <person name="Wang X."/>
            <person name="Li D."/>
            <person name="Liu D."/>
            <person name="Zhang X."/>
            <person name="Ji Z."/>
            <person name="Zhao W."/>
            <person name="Sun Y."/>
            <person name="Zhang Z."/>
            <person name="Bao J."/>
            <person name="Han Y."/>
            <person name="Dong L."/>
            <person name="Ji J."/>
            <person name="Chen P."/>
            <person name="Wu S."/>
            <person name="Liu J."/>
            <person name="Xiao Y."/>
            <person name="Bu D."/>
            <person name="Tan J."/>
            <person name="Yang L."/>
            <person name="Ye C."/>
            <person name="Zhang J."/>
            <person name="Xu J."/>
            <person name="Zhou Y."/>
            <person name="Yu Y."/>
            <person name="Zhang B."/>
            <person name="Zhuang S."/>
            <person name="Wei H."/>
            <person name="Liu B."/>
            <person name="Lei M."/>
            <person name="Yu H."/>
            <person name="Li Y."/>
            <person name="Xu H."/>
            <person name="Wei S."/>
            <person name="He X."/>
            <person name="Fang L."/>
            <person name="Zhang Z."/>
            <person name="Zhang Y."/>
            <person name="Huang X."/>
            <person name="Su Z."/>
            <person name="Tong W."/>
            <person name="Li J."/>
            <person name="Tong Z."/>
            <person name="Li S."/>
            <person name="Ye J."/>
            <person name="Wang L."/>
            <person name="Fang L."/>
            <person name="Lei T."/>
            <person name="Chen C.-S."/>
            <person name="Chen H.-C."/>
            <person name="Xu Z."/>
            <person name="Li H."/>
            <person name="Huang H."/>
            <person name="Zhang F."/>
            <person name="Xu H."/>
            <person name="Li N."/>
            <person name="Zhao C."/>
            <person name="Li S."/>
            <person name="Dong L."/>
            <person name="Huang Y."/>
            <person name="Li L."/>
            <person name="Xi Y."/>
            <person name="Qi Q."/>
            <person name="Li W."/>
            <person name="Zhang B."/>
            <person name="Hu W."/>
            <person name="Zhang Y."/>
            <person name="Tian X."/>
            <person name="Jiao Y."/>
            <person name="Liang X."/>
            <person name="Jin J."/>
            <person name="Gao L."/>
            <person name="Zheng W."/>
            <person name="Hao B."/>
            <person name="Liu S.-M."/>
            <person name="Wang W."/>
            <person name="Yuan L."/>
            <person name="Cao M."/>
            <person name="McDermott J."/>
            <person name="Samudrala R."/>
            <person name="Wang J."/>
            <person name="Wong G.K.-S."/>
            <person name="Yang H."/>
        </authorList>
    </citation>
    <scope>NUCLEOTIDE SEQUENCE [LARGE SCALE GENOMIC DNA]</scope>
    <source>
        <strain>cv. Nipponbare</strain>
    </source>
</reference>
<reference key="6">
    <citation type="journal article" date="2006" name="J. Exp. Bot.">
        <title>Genome-wide analysis of plant glutaredoxin systems.</title>
        <authorList>
            <person name="Rouhier N."/>
            <person name="Couturier J."/>
            <person name="Jacquot J.-P."/>
        </authorList>
    </citation>
    <scope>GENE FAMILY</scope>
</reference>
<evidence type="ECO:0000250" key="1"/>
<evidence type="ECO:0000255" key="2">
    <source>
        <dbReference type="PROSITE-ProRule" id="PRU00686"/>
    </source>
</evidence>
<evidence type="ECO:0000305" key="3"/>
<evidence type="ECO:0000312" key="4">
    <source>
        <dbReference type="EMBL" id="EAZ14758.1"/>
    </source>
</evidence>
<gene>
    <name type="primary">GRXC2</name>
    <name type="ordered locus">Os01g0936000</name>
    <name type="ordered locus">LOC_Os01g70990</name>
    <name evidence="4" type="ORF">OsJ_04685</name>
    <name type="ORF">P0492G09.32</name>
</gene>
<feature type="chain" id="PRO_0000269664" description="Putative glutaredoxin-C2">
    <location>
        <begin position="1"/>
        <end position="125"/>
    </location>
</feature>
<feature type="domain" description="Glutaredoxin" evidence="2">
    <location>
        <begin position="2"/>
        <end position="103"/>
    </location>
</feature>
<feature type="disulfide bond" description="Redox-active" evidence="1">
    <location>
        <begin position="22"/>
        <end position="25"/>
    </location>
</feature>
<organism>
    <name type="scientific">Oryza sativa subsp. japonica</name>
    <name type="common">Rice</name>
    <dbReference type="NCBI Taxonomy" id="39947"/>
    <lineage>
        <taxon>Eukaryota</taxon>
        <taxon>Viridiplantae</taxon>
        <taxon>Streptophyta</taxon>
        <taxon>Embryophyta</taxon>
        <taxon>Tracheophyta</taxon>
        <taxon>Spermatophyta</taxon>
        <taxon>Magnoliopsida</taxon>
        <taxon>Liliopsida</taxon>
        <taxon>Poales</taxon>
        <taxon>Poaceae</taxon>
        <taxon>BOP clade</taxon>
        <taxon>Oryzoideae</taxon>
        <taxon>Oryzeae</taxon>
        <taxon>Oryzinae</taxon>
        <taxon>Oryza</taxon>
        <taxon>Oryza sativa</taxon>
    </lineage>
</organism>
<proteinExistence type="inferred from homology"/>
<dbReference type="EMBL" id="AP003266">
    <property type="protein sequence ID" value="BAB64202.1"/>
    <property type="molecule type" value="Genomic_DNA"/>
</dbReference>
<dbReference type="EMBL" id="AP008207">
    <property type="protein sequence ID" value="BAF07239.2"/>
    <property type="molecule type" value="Genomic_DNA"/>
</dbReference>
<dbReference type="EMBL" id="AP014957">
    <property type="protein sequence ID" value="BAS76099.1"/>
    <property type="molecule type" value="Genomic_DNA"/>
</dbReference>
<dbReference type="EMBL" id="CM000138">
    <property type="protein sequence ID" value="EAZ14758.1"/>
    <property type="molecule type" value="Genomic_DNA"/>
</dbReference>
<dbReference type="RefSeq" id="XP_015646989.1">
    <property type="nucleotide sequence ID" value="XM_015791503.1"/>
</dbReference>
<dbReference type="SMR" id="Q0JG89"/>
<dbReference type="FunCoup" id="Q0JG89">
    <property type="interactions" value="19"/>
</dbReference>
<dbReference type="STRING" id="39947.Q0JG89"/>
<dbReference type="PaxDb" id="39947-Q0JG89"/>
<dbReference type="EnsemblPlants" id="Os01t0936000-00">
    <property type="protein sequence ID" value="Os01t0936000-00"/>
    <property type="gene ID" value="Os01g0936000"/>
</dbReference>
<dbReference type="Gramene" id="Os01t0936000-00">
    <property type="protein sequence ID" value="Os01t0936000-00"/>
    <property type="gene ID" value="Os01g0936000"/>
</dbReference>
<dbReference type="KEGG" id="dosa:Os01g0936000"/>
<dbReference type="eggNOG" id="KOG1752">
    <property type="taxonomic scope" value="Eukaryota"/>
</dbReference>
<dbReference type="HOGENOM" id="CLU_026126_6_0_1"/>
<dbReference type="InParanoid" id="Q0JG89"/>
<dbReference type="OMA" id="ASWAVHE"/>
<dbReference type="OrthoDB" id="418495at2759"/>
<dbReference type="Proteomes" id="UP000000763">
    <property type="component" value="Chromosome 1"/>
</dbReference>
<dbReference type="Proteomes" id="UP000007752">
    <property type="component" value="Chromosome 1"/>
</dbReference>
<dbReference type="Proteomes" id="UP000059680">
    <property type="component" value="Chromosome 1"/>
</dbReference>
<dbReference type="GO" id="GO:0005737">
    <property type="term" value="C:cytoplasm"/>
    <property type="evidence" value="ECO:0007669"/>
    <property type="project" value="UniProtKB-SubCell"/>
</dbReference>
<dbReference type="CDD" id="cd03419">
    <property type="entry name" value="GRX_GRXh_1_2_like"/>
    <property type="match status" value="1"/>
</dbReference>
<dbReference type="Gene3D" id="3.40.30.10">
    <property type="entry name" value="Glutaredoxin"/>
    <property type="match status" value="1"/>
</dbReference>
<dbReference type="InterPro" id="IPR011905">
    <property type="entry name" value="GlrX-like_pln_2"/>
</dbReference>
<dbReference type="InterPro" id="IPR002109">
    <property type="entry name" value="Glutaredoxin"/>
</dbReference>
<dbReference type="InterPro" id="IPR036249">
    <property type="entry name" value="Thioredoxin-like_sf"/>
</dbReference>
<dbReference type="NCBIfam" id="TIGR02189">
    <property type="entry name" value="GlrX-like_plant"/>
    <property type="match status" value="1"/>
</dbReference>
<dbReference type="PANTHER" id="PTHR10168">
    <property type="entry name" value="GLUTAREDOXIN"/>
    <property type="match status" value="1"/>
</dbReference>
<dbReference type="Pfam" id="PF00462">
    <property type="entry name" value="Glutaredoxin"/>
    <property type="match status" value="1"/>
</dbReference>
<dbReference type="SUPFAM" id="SSF52833">
    <property type="entry name" value="Thioredoxin-like"/>
    <property type="match status" value="1"/>
</dbReference>
<dbReference type="PROSITE" id="PS51354">
    <property type="entry name" value="GLUTAREDOXIN_2"/>
    <property type="match status" value="1"/>
</dbReference>